<gene>
    <name type="primary">AS</name>
</gene>
<sequence length="470" mass="51794">MEHTPHIAMVPTPGMGHLIPLVEFAKRLVLRHNFGVTFIIPTDGPLPKAQKSFLDALPAGVNYVLLPPVSFDDLPADVRIETRICLTITRSLPFVRDAVKTLLATTKLAALVVDLFGTDAFDVAIEFKVSPYIFYPTTAMCLSLFFHLPKLDQMVSCEYRDVPEPLQIPGCIPIHGKDFLDPAQDRKNDAYKCLLHQAKRYRLAEGIMVNTFNDLEPGPLKALQEEDQGKPPVYPIGPLIRADSSSKVDDCECLKWLDDQPRGSVLFISFGSGGAVSHNQFIELALGLEMSEQRFLWVVRSPNDKIANATYFSIQNQNDALAYLPEGFLERTKGRCLLVPSWAPQTEILSHGSTGGFLTHCGWNSILESVVNGVPLIAWPLYAEQKMNAVMLTEGLKVALRPKAGENGLIGRVEIANAVKGLMEGEEGKKFRSTMKDLKDAASRALSDDGSSTKALAELACKWENKISST</sequence>
<dbReference type="EC" id="2.4.1.218"/>
<dbReference type="EMBL" id="AJ310148">
    <property type="protein sequence ID" value="CAC35167.1"/>
    <property type="molecule type" value="mRNA"/>
</dbReference>
<dbReference type="SMR" id="Q9AR73"/>
<dbReference type="CAZy" id="GT1">
    <property type="family name" value="Glycosyltransferase Family 1"/>
</dbReference>
<dbReference type="KEGG" id="ag:CAC35167"/>
<dbReference type="BRENDA" id="2.4.1.218">
    <property type="organism ID" value="5309"/>
</dbReference>
<dbReference type="GO" id="GO:0050505">
    <property type="term" value="F:hydroquinone glucosyltransferase activity"/>
    <property type="evidence" value="ECO:0007669"/>
    <property type="project" value="UniProtKB-EC"/>
</dbReference>
<dbReference type="CDD" id="cd03784">
    <property type="entry name" value="GT1_Gtf-like"/>
    <property type="match status" value="1"/>
</dbReference>
<dbReference type="FunFam" id="3.40.50.2000:FF:000051">
    <property type="entry name" value="Glycosyltransferase"/>
    <property type="match status" value="1"/>
</dbReference>
<dbReference type="FunFam" id="3.40.50.2000:FF:000054">
    <property type="entry name" value="Glycosyltransferase"/>
    <property type="match status" value="1"/>
</dbReference>
<dbReference type="Gene3D" id="3.40.50.2000">
    <property type="entry name" value="Glycogen Phosphorylase B"/>
    <property type="match status" value="2"/>
</dbReference>
<dbReference type="InterPro" id="IPR002213">
    <property type="entry name" value="UDP_glucos_trans"/>
</dbReference>
<dbReference type="InterPro" id="IPR035595">
    <property type="entry name" value="UDP_glycos_trans_CS"/>
</dbReference>
<dbReference type="PANTHER" id="PTHR48046:SF6">
    <property type="entry name" value="GLYCOSYLTRANSFERASE"/>
    <property type="match status" value="1"/>
</dbReference>
<dbReference type="PANTHER" id="PTHR48046">
    <property type="entry name" value="UDP-GLYCOSYLTRANSFERASE 72E1"/>
    <property type="match status" value="1"/>
</dbReference>
<dbReference type="Pfam" id="PF00201">
    <property type="entry name" value="UDPGT"/>
    <property type="match status" value="1"/>
</dbReference>
<dbReference type="SUPFAM" id="SSF53756">
    <property type="entry name" value="UDP-Glycosyltransferase/glycogen phosphorylase"/>
    <property type="match status" value="1"/>
</dbReference>
<dbReference type="PROSITE" id="PS00375">
    <property type="entry name" value="UDPGT"/>
    <property type="match status" value="1"/>
</dbReference>
<name>HQGT_RAUSE</name>
<accession>Q9AR73</accession>
<feature type="chain" id="PRO_0000074161" description="Hydroquinone glucosyltransferase">
    <location>
        <begin position="1"/>
        <end position="470"/>
    </location>
</feature>
<feature type="active site" description="Proton acceptor" evidence="1">
    <location>
        <position position="17"/>
    </location>
</feature>
<feature type="active site" description="Charge relay" evidence="1">
    <location>
        <position position="114"/>
    </location>
</feature>
<feature type="binding site" evidence="2">
    <location>
        <position position="17"/>
    </location>
    <ligand>
        <name>an anthocyanidin</name>
        <dbReference type="ChEBI" id="CHEBI:143576"/>
    </ligand>
</feature>
<feature type="binding site" evidence="1">
    <location>
        <position position="343"/>
    </location>
    <ligand>
        <name>UDP-alpha-D-glucose</name>
        <dbReference type="ChEBI" id="CHEBI:58885"/>
    </ligand>
</feature>
<feature type="binding site" evidence="1">
    <location>
        <position position="345"/>
    </location>
    <ligand>
        <name>UDP-alpha-D-glucose</name>
        <dbReference type="ChEBI" id="CHEBI:58885"/>
    </ligand>
</feature>
<feature type="binding site" evidence="1">
    <location>
        <position position="360"/>
    </location>
    <ligand>
        <name>UDP-alpha-D-glucose</name>
        <dbReference type="ChEBI" id="CHEBI:58885"/>
    </ligand>
</feature>
<feature type="binding site" evidence="1">
    <location>
        <position position="363"/>
    </location>
    <ligand>
        <name>UDP-alpha-D-glucose</name>
        <dbReference type="ChEBI" id="CHEBI:58885"/>
    </ligand>
</feature>
<feature type="binding site" evidence="1">
    <location>
        <position position="364"/>
    </location>
    <ligand>
        <name>UDP-alpha-D-glucose</name>
        <dbReference type="ChEBI" id="CHEBI:58885"/>
    </ligand>
</feature>
<feature type="binding site" evidence="1">
    <location>
        <position position="365"/>
    </location>
    <ligand>
        <name>UDP-alpha-D-glucose</name>
        <dbReference type="ChEBI" id="CHEBI:58885"/>
    </ligand>
</feature>
<feature type="binding site" evidence="1">
    <location>
        <position position="368"/>
    </location>
    <ligand>
        <name>UDP-alpha-D-glucose</name>
        <dbReference type="ChEBI" id="CHEBI:58885"/>
    </ligand>
</feature>
<feature type="binding site" evidence="2">
    <location>
        <position position="383"/>
    </location>
    <ligand>
        <name>an anthocyanidin</name>
        <dbReference type="ChEBI" id="CHEBI:143576"/>
    </ligand>
</feature>
<feature type="binding site" evidence="1">
    <location>
        <position position="384"/>
    </location>
    <ligand>
        <name>UDP-alpha-D-glucose</name>
        <dbReference type="ChEBI" id="CHEBI:58885"/>
    </ligand>
</feature>
<feature type="binding site" evidence="1">
    <location>
        <position position="385"/>
    </location>
    <ligand>
        <name>UDP-alpha-D-glucose</name>
        <dbReference type="ChEBI" id="CHEBI:58885"/>
    </ligand>
</feature>
<protein>
    <recommendedName>
        <fullName>Hydroquinone glucosyltransferase</fullName>
        <ecNumber>2.4.1.218</ecNumber>
    </recommendedName>
    <alternativeName>
        <fullName>Arbutin synthase</fullName>
    </alternativeName>
</protein>
<keyword id="KW-0903">Direct protein sequencing</keyword>
<keyword id="KW-0328">Glycosyltransferase</keyword>
<keyword id="KW-0808">Transferase</keyword>
<reference key="1">
    <citation type="journal article" date="2002" name="Bioorg. Med. Chem.">
        <title>Arbutin synthase, a novel member of the NRD1beta glycosyltransferase family, is a unique multifunctional enzyme converting various natural products and xenobiotics.</title>
        <authorList>
            <person name="Hefner T."/>
            <person name="Arend J."/>
            <person name="Warzecha H."/>
            <person name="Siems K."/>
            <person name="Stoeckigt J."/>
        </authorList>
    </citation>
    <scope>NUCLEOTIDE SEQUENCE [MRNA]</scope>
    <scope>CHARACTERIZATION</scope>
</reference>
<reference key="2">
    <citation type="journal article" date="2000" name="Phytochemistry">
        <title>Hydroquinone:O-glucosyltransferase from cultivated Rauvolfia cells: enrichment and partial amino acid sequences.</title>
        <authorList>
            <person name="Arend J."/>
            <person name="Warzecha H."/>
            <person name="Stoeckigt J."/>
        </authorList>
    </citation>
    <scope>PARTIAL PROTEIN SEQUENCE</scope>
    <scope>CHARACTERIZATION</scope>
</reference>
<evidence type="ECO:0000250" key="1">
    <source>
        <dbReference type="UniProtKB" id="A0A0A1HA03"/>
    </source>
</evidence>
<evidence type="ECO:0000250" key="2">
    <source>
        <dbReference type="UniProtKB" id="P51094"/>
    </source>
</evidence>
<evidence type="ECO:0000305" key="3"/>
<proteinExistence type="evidence at protein level"/>
<comment type="function">
    <text>Broad spectrum multifunctional glucosyltransferase. In addition to hydroquinone it accepts at least 45 natural and synthetic phenols as well as two cinnamyl alcohols as substrates. Hydroquinone was however the best substrate. In contrast to this broad acceptor substrate specificity, only pyrimidine nucleotide activated glucose is tolerated as a donor substrate.</text>
</comment>
<comment type="catalytic activity">
    <reaction>
        <text>hydroquinone + UDP-alpha-D-glucose = hydroquinone O-beta-D-glucopyranoside + UDP + H(+)</text>
        <dbReference type="Rhea" id="RHEA:12560"/>
        <dbReference type="ChEBI" id="CHEBI:15378"/>
        <dbReference type="ChEBI" id="CHEBI:17594"/>
        <dbReference type="ChEBI" id="CHEBI:18305"/>
        <dbReference type="ChEBI" id="CHEBI:58223"/>
        <dbReference type="ChEBI" id="CHEBI:58885"/>
        <dbReference type="EC" id="2.4.1.218"/>
    </reaction>
</comment>
<comment type="similarity">
    <text evidence="3">Belongs to the UDP-glycosyltransferase family.</text>
</comment>
<organism>
    <name type="scientific">Rauvolfia serpentina</name>
    <name type="common">Serpentine wood</name>
    <name type="synonym">Ophioxylon serpentinum</name>
    <dbReference type="NCBI Taxonomy" id="4060"/>
    <lineage>
        <taxon>Eukaryota</taxon>
        <taxon>Viridiplantae</taxon>
        <taxon>Streptophyta</taxon>
        <taxon>Embryophyta</taxon>
        <taxon>Tracheophyta</taxon>
        <taxon>Spermatophyta</taxon>
        <taxon>Magnoliopsida</taxon>
        <taxon>eudicotyledons</taxon>
        <taxon>Gunneridae</taxon>
        <taxon>Pentapetalae</taxon>
        <taxon>asterids</taxon>
        <taxon>lamiids</taxon>
        <taxon>Gentianales</taxon>
        <taxon>Apocynaceae</taxon>
        <taxon>Rauvolfioideae</taxon>
        <taxon>Vinceae</taxon>
        <taxon>Rauvolfiinae</taxon>
        <taxon>Rauvolfia</taxon>
    </lineage>
</organism>